<reference key="1">
    <citation type="journal article" date="2003" name="J. Bacteriol.">
        <title>Complete genome sequence of the ammonia-oxidizing bacterium and obligate chemolithoautotroph Nitrosomonas europaea.</title>
        <authorList>
            <person name="Chain P."/>
            <person name="Lamerdin J.E."/>
            <person name="Larimer F.W."/>
            <person name="Regala W."/>
            <person name="Lao V."/>
            <person name="Land M.L."/>
            <person name="Hauser L."/>
            <person name="Hooper A.B."/>
            <person name="Klotz M.G."/>
            <person name="Norton J."/>
            <person name="Sayavedra-Soto L.A."/>
            <person name="Arciero D.M."/>
            <person name="Hommes N.G."/>
            <person name="Whittaker M.M."/>
            <person name="Arp D.J."/>
        </authorList>
    </citation>
    <scope>NUCLEOTIDE SEQUENCE [LARGE SCALE GENOMIC DNA]</scope>
    <source>
        <strain>ATCC 19718 / CIP 103999 / KCTC 2705 / NBRC 14298</strain>
    </source>
</reference>
<protein>
    <recommendedName>
        <fullName evidence="1">3-isopropylmalate dehydratase large subunit</fullName>
        <ecNumber evidence="1">4.2.1.33</ecNumber>
    </recommendedName>
    <alternativeName>
        <fullName evidence="1">Alpha-IPM isomerase</fullName>
        <shortName evidence="1">IPMI</shortName>
    </alternativeName>
    <alternativeName>
        <fullName evidence="1">Isopropylmalate isomerase</fullName>
    </alternativeName>
</protein>
<accession>Q82WI9</accession>
<sequence>MKTLYDKLWSDHVVHAESDDPNGMVILYIDRHLVHEVTSPQAFESLKLAGRKPWRTGSILAVADHNVPTTDRSSGISDPVSRLQVETLDQNCEEFAITEFRMNDERQGIVHVIGPEQGATLPGMTVVCGDSHTSTHGAFACLAFGIGTSEVEHVLATQCLVARKSKTMLVRVEGDLPPGVTAKDIALAVIGEIGTAGGTGYAIEFAGSAIRSLSMEGRMTLCNMAIEAGARAGMVGADEVTIDYIKGRPFAPQGALWDQAVAYWRTLKSDEDAVFDRMVELKAVNIKPQVTWGTSPEMVTTVDGYVPDPADISDPTKRHDVEHALGYMGLKPKMPIQEITLDKVFIGSCTNSRIEDLRAAAEIVKGKRIAPNIRLAMVVPGSGLVKSMAEKEGLDKIFLSAGFEWREPGCSMCLAMNDDRLLPGERCASTSNRNFEGRQGPGGRTHLVSPAMAAAAAIAGHFVDVRSFIR</sequence>
<keyword id="KW-0004">4Fe-4S</keyword>
<keyword id="KW-0028">Amino-acid biosynthesis</keyword>
<keyword id="KW-0100">Branched-chain amino acid biosynthesis</keyword>
<keyword id="KW-0408">Iron</keyword>
<keyword id="KW-0411">Iron-sulfur</keyword>
<keyword id="KW-0432">Leucine biosynthesis</keyword>
<keyword id="KW-0456">Lyase</keyword>
<keyword id="KW-0479">Metal-binding</keyword>
<keyword id="KW-1185">Reference proteome</keyword>
<proteinExistence type="inferred from homology"/>
<dbReference type="EC" id="4.2.1.33" evidence="1"/>
<dbReference type="EMBL" id="AL954747">
    <property type="protein sequence ID" value="CAD84596.1"/>
    <property type="molecule type" value="Genomic_DNA"/>
</dbReference>
<dbReference type="RefSeq" id="WP_011111306.1">
    <property type="nucleotide sequence ID" value="NC_004757.1"/>
</dbReference>
<dbReference type="SMR" id="Q82WI9"/>
<dbReference type="STRING" id="228410.NE0685"/>
<dbReference type="DNASU" id="1081624"/>
<dbReference type="GeneID" id="87103880"/>
<dbReference type="KEGG" id="neu:NE0685"/>
<dbReference type="eggNOG" id="COG0065">
    <property type="taxonomic scope" value="Bacteria"/>
</dbReference>
<dbReference type="HOGENOM" id="CLU_006714_3_4_4"/>
<dbReference type="OrthoDB" id="9802769at2"/>
<dbReference type="PhylomeDB" id="Q82WI9"/>
<dbReference type="UniPathway" id="UPA00048">
    <property type="reaction ID" value="UER00071"/>
</dbReference>
<dbReference type="Proteomes" id="UP000001416">
    <property type="component" value="Chromosome"/>
</dbReference>
<dbReference type="GO" id="GO:0003861">
    <property type="term" value="F:3-isopropylmalate dehydratase activity"/>
    <property type="evidence" value="ECO:0007669"/>
    <property type="project" value="UniProtKB-UniRule"/>
</dbReference>
<dbReference type="GO" id="GO:0051539">
    <property type="term" value="F:4 iron, 4 sulfur cluster binding"/>
    <property type="evidence" value="ECO:0007669"/>
    <property type="project" value="UniProtKB-KW"/>
</dbReference>
<dbReference type="GO" id="GO:0046872">
    <property type="term" value="F:metal ion binding"/>
    <property type="evidence" value="ECO:0007669"/>
    <property type="project" value="UniProtKB-KW"/>
</dbReference>
<dbReference type="GO" id="GO:0009098">
    <property type="term" value="P:L-leucine biosynthetic process"/>
    <property type="evidence" value="ECO:0007669"/>
    <property type="project" value="UniProtKB-UniRule"/>
</dbReference>
<dbReference type="CDD" id="cd01583">
    <property type="entry name" value="IPMI"/>
    <property type="match status" value="1"/>
</dbReference>
<dbReference type="FunFam" id="3.30.499.10:FF:000007">
    <property type="entry name" value="3-isopropylmalate dehydratase large subunit"/>
    <property type="match status" value="1"/>
</dbReference>
<dbReference type="Gene3D" id="3.30.499.10">
    <property type="entry name" value="Aconitase, domain 3"/>
    <property type="match status" value="2"/>
</dbReference>
<dbReference type="HAMAP" id="MF_01026">
    <property type="entry name" value="LeuC_type1"/>
    <property type="match status" value="1"/>
</dbReference>
<dbReference type="InterPro" id="IPR004430">
    <property type="entry name" value="3-IsopropMal_deHydase_lsu"/>
</dbReference>
<dbReference type="InterPro" id="IPR015931">
    <property type="entry name" value="Acnase/IPM_dHydase_lsu_aba_1/3"/>
</dbReference>
<dbReference type="InterPro" id="IPR001030">
    <property type="entry name" value="Acoase/IPM_deHydtase_lsu_aba"/>
</dbReference>
<dbReference type="InterPro" id="IPR018136">
    <property type="entry name" value="Aconitase_4Fe-4S_BS"/>
</dbReference>
<dbReference type="InterPro" id="IPR036008">
    <property type="entry name" value="Aconitase_4Fe-4S_dom"/>
</dbReference>
<dbReference type="InterPro" id="IPR050067">
    <property type="entry name" value="IPM_dehydratase_rel_enz"/>
</dbReference>
<dbReference type="InterPro" id="IPR033941">
    <property type="entry name" value="IPMI_cat"/>
</dbReference>
<dbReference type="NCBIfam" id="TIGR00170">
    <property type="entry name" value="leuC"/>
    <property type="match status" value="1"/>
</dbReference>
<dbReference type="NCBIfam" id="NF004016">
    <property type="entry name" value="PRK05478.1"/>
    <property type="match status" value="1"/>
</dbReference>
<dbReference type="NCBIfam" id="NF009116">
    <property type="entry name" value="PRK12466.1"/>
    <property type="match status" value="1"/>
</dbReference>
<dbReference type="PANTHER" id="PTHR43822:SF9">
    <property type="entry name" value="3-ISOPROPYLMALATE DEHYDRATASE"/>
    <property type="match status" value="1"/>
</dbReference>
<dbReference type="PANTHER" id="PTHR43822">
    <property type="entry name" value="HOMOACONITASE, MITOCHONDRIAL-RELATED"/>
    <property type="match status" value="1"/>
</dbReference>
<dbReference type="Pfam" id="PF00330">
    <property type="entry name" value="Aconitase"/>
    <property type="match status" value="1"/>
</dbReference>
<dbReference type="PRINTS" id="PR00415">
    <property type="entry name" value="ACONITASE"/>
</dbReference>
<dbReference type="SUPFAM" id="SSF53732">
    <property type="entry name" value="Aconitase iron-sulfur domain"/>
    <property type="match status" value="1"/>
</dbReference>
<dbReference type="PROSITE" id="PS00450">
    <property type="entry name" value="ACONITASE_1"/>
    <property type="match status" value="1"/>
</dbReference>
<dbReference type="PROSITE" id="PS01244">
    <property type="entry name" value="ACONITASE_2"/>
    <property type="match status" value="1"/>
</dbReference>
<organism>
    <name type="scientific">Nitrosomonas europaea (strain ATCC 19718 / CIP 103999 / KCTC 2705 / NBRC 14298)</name>
    <dbReference type="NCBI Taxonomy" id="228410"/>
    <lineage>
        <taxon>Bacteria</taxon>
        <taxon>Pseudomonadati</taxon>
        <taxon>Pseudomonadota</taxon>
        <taxon>Betaproteobacteria</taxon>
        <taxon>Nitrosomonadales</taxon>
        <taxon>Nitrosomonadaceae</taxon>
        <taxon>Nitrosomonas</taxon>
    </lineage>
</organism>
<gene>
    <name evidence="1" type="primary">leuC</name>
    <name type="ordered locus">NE0685</name>
</gene>
<evidence type="ECO:0000255" key="1">
    <source>
        <dbReference type="HAMAP-Rule" id="MF_01026"/>
    </source>
</evidence>
<name>LEUC_NITEU</name>
<feature type="chain" id="PRO_0000076772" description="3-isopropylmalate dehydratase large subunit">
    <location>
        <begin position="1"/>
        <end position="470"/>
    </location>
</feature>
<feature type="binding site" evidence="1">
    <location>
        <position position="349"/>
    </location>
    <ligand>
        <name>[4Fe-4S] cluster</name>
        <dbReference type="ChEBI" id="CHEBI:49883"/>
    </ligand>
</feature>
<feature type="binding site" evidence="1">
    <location>
        <position position="410"/>
    </location>
    <ligand>
        <name>[4Fe-4S] cluster</name>
        <dbReference type="ChEBI" id="CHEBI:49883"/>
    </ligand>
</feature>
<feature type="binding site" evidence="1">
    <location>
        <position position="413"/>
    </location>
    <ligand>
        <name>[4Fe-4S] cluster</name>
        <dbReference type="ChEBI" id="CHEBI:49883"/>
    </ligand>
</feature>
<comment type="function">
    <text evidence="1">Catalyzes the isomerization between 2-isopropylmalate and 3-isopropylmalate, via the formation of 2-isopropylmaleate.</text>
</comment>
<comment type="catalytic activity">
    <reaction evidence="1">
        <text>(2R,3S)-3-isopropylmalate = (2S)-2-isopropylmalate</text>
        <dbReference type="Rhea" id="RHEA:32287"/>
        <dbReference type="ChEBI" id="CHEBI:1178"/>
        <dbReference type="ChEBI" id="CHEBI:35121"/>
        <dbReference type="EC" id="4.2.1.33"/>
    </reaction>
</comment>
<comment type="cofactor">
    <cofactor evidence="1">
        <name>[4Fe-4S] cluster</name>
        <dbReference type="ChEBI" id="CHEBI:49883"/>
    </cofactor>
    <text evidence="1">Binds 1 [4Fe-4S] cluster per subunit.</text>
</comment>
<comment type="pathway">
    <text evidence="1">Amino-acid biosynthesis; L-leucine biosynthesis; L-leucine from 3-methyl-2-oxobutanoate: step 2/4.</text>
</comment>
<comment type="subunit">
    <text evidence="1">Heterodimer of LeuC and LeuD.</text>
</comment>
<comment type="similarity">
    <text evidence="1">Belongs to the aconitase/IPM isomerase family. LeuC type 1 subfamily.</text>
</comment>